<evidence type="ECO:0000255" key="1">
    <source>
        <dbReference type="HAMAP-Rule" id="MF_00365"/>
    </source>
</evidence>
<protein>
    <recommendedName>
        <fullName evidence="1">DNA replication and repair protein RecF</fullName>
    </recommendedName>
</protein>
<keyword id="KW-0067">ATP-binding</keyword>
<keyword id="KW-0963">Cytoplasm</keyword>
<keyword id="KW-0227">DNA damage</keyword>
<keyword id="KW-0234">DNA repair</keyword>
<keyword id="KW-0235">DNA replication</keyword>
<keyword id="KW-0238">DNA-binding</keyword>
<keyword id="KW-0547">Nucleotide-binding</keyword>
<keyword id="KW-0742">SOS response</keyword>
<accession>C3PM56</accession>
<comment type="function">
    <text evidence="1">The RecF protein is involved in DNA metabolism; it is required for DNA replication and normal SOS inducibility. RecF binds preferentially to single-stranded, linear DNA. It also seems to bind ATP.</text>
</comment>
<comment type="subcellular location">
    <subcellularLocation>
        <location evidence="1">Cytoplasm</location>
    </subcellularLocation>
</comment>
<comment type="similarity">
    <text evidence="1">Belongs to the RecF family.</text>
</comment>
<organism>
    <name type="scientific">Rickettsia africae (strain ESF-5)</name>
    <dbReference type="NCBI Taxonomy" id="347255"/>
    <lineage>
        <taxon>Bacteria</taxon>
        <taxon>Pseudomonadati</taxon>
        <taxon>Pseudomonadota</taxon>
        <taxon>Alphaproteobacteria</taxon>
        <taxon>Rickettsiales</taxon>
        <taxon>Rickettsiaceae</taxon>
        <taxon>Rickettsieae</taxon>
        <taxon>Rickettsia</taxon>
        <taxon>spotted fever group</taxon>
    </lineage>
</organism>
<gene>
    <name evidence="1" type="primary">recF</name>
    <name type="ordered locus">RAF_ORF0030</name>
</gene>
<proteinExistence type="inferred from homology"/>
<reference key="1">
    <citation type="journal article" date="2009" name="BMC Genomics">
        <title>Analysis of the Rickettsia africae genome reveals that virulence acquisition in Rickettsia species may be explained by genome reduction.</title>
        <authorList>
            <person name="Fournier P.-E."/>
            <person name="El Karkouri K."/>
            <person name="Leroy Q."/>
            <person name="Robert C."/>
            <person name="Giumelli B."/>
            <person name="Renesto P."/>
            <person name="Socolovschi C."/>
            <person name="Parola P."/>
            <person name="Audic S."/>
            <person name="Raoult D."/>
        </authorList>
    </citation>
    <scope>NUCLEOTIDE SEQUENCE [LARGE SCALE GENOMIC DNA]</scope>
    <source>
        <strain>ESF-5</strain>
    </source>
</reference>
<sequence>MKNIFLHSLSLENYRNFKNLELKTDNTPIILIGENGSGKTNILEAISLFYPGRGLRSAKLANVCKTSEDHCLVKALLQSKLGLAEFTTQFKRSSNRRITEYNESKIANNELSKFTSMVWLTPHMEGIFTSGSSDRRKFLDRIVYNFDPKHAELVSKYEYYMHERNKILVEDIRDDNWLKIIEEKMADISNHIANNRLKTLEFMQQAIDDLENEFPKADLSIDGIVEQKILNGKKNIVSFITAELYQTRSKDKLLGRTSFGVHKSDFLVKHQKKNILAKFCSTGEQKAILIAIILAEMNYAIKLTKIAPILLLDEVFVHLDDKRRQYLIEFLIGLNMQLWVTTTNLEGIENFATKAQLIKL</sequence>
<dbReference type="EMBL" id="CP001612">
    <property type="protein sequence ID" value="ACP53016.1"/>
    <property type="molecule type" value="Genomic_DNA"/>
</dbReference>
<dbReference type="RefSeq" id="WP_012719319.1">
    <property type="nucleotide sequence ID" value="NC_012633.1"/>
</dbReference>
<dbReference type="SMR" id="C3PM56"/>
<dbReference type="KEGG" id="raf:RAF_ORF0030"/>
<dbReference type="HOGENOM" id="CLU_040267_2_0_5"/>
<dbReference type="Proteomes" id="UP000002305">
    <property type="component" value="Chromosome"/>
</dbReference>
<dbReference type="GO" id="GO:0005737">
    <property type="term" value="C:cytoplasm"/>
    <property type="evidence" value="ECO:0007669"/>
    <property type="project" value="UniProtKB-SubCell"/>
</dbReference>
<dbReference type="GO" id="GO:0005524">
    <property type="term" value="F:ATP binding"/>
    <property type="evidence" value="ECO:0007669"/>
    <property type="project" value="UniProtKB-UniRule"/>
</dbReference>
<dbReference type="GO" id="GO:0003697">
    <property type="term" value="F:single-stranded DNA binding"/>
    <property type="evidence" value="ECO:0007669"/>
    <property type="project" value="UniProtKB-UniRule"/>
</dbReference>
<dbReference type="GO" id="GO:0006260">
    <property type="term" value="P:DNA replication"/>
    <property type="evidence" value="ECO:0007669"/>
    <property type="project" value="UniProtKB-UniRule"/>
</dbReference>
<dbReference type="GO" id="GO:0000731">
    <property type="term" value="P:DNA synthesis involved in DNA repair"/>
    <property type="evidence" value="ECO:0007669"/>
    <property type="project" value="TreeGrafter"/>
</dbReference>
<dbReference type="GO" id="GO:0006302">
    <property type="term" value="P:double-strand break repair"/>
    <property type="evidence" value="ECO:0007669"/>
    <property type="project" value="TreeGrafter"/>
</dbReference>
<dbReference type="GO" id="GO:0009432">
    <property type="term" value="P:SOS response"/>
    <property type="evidence" value="ECO:0007669"/>
    <property type="project" value="UniProtKB-UniRule"/>
</dbReference>
<dbReference type="Gene3D" id="3.40.50.300">
    <property type="entry name" value="P-loop containing nucleotide triphosphate hydrolases"/>
    <property type="match status" value="1"/>
</dbReference>
<dbReference type="Gene3D" id="1.20.1050.90">
    <property type="entry name" value="RecF/RecN/SMC, N-terminal domain"/>
    <property type="match status" value="1"/>
</dbReference>
<dbReference type="HAMAP" id="MF_00365">
    <property type="entry name" value="RecF"/>
    <property type="match status" value="1"/>
</dbReference>
<dbReference type="InterPro" id="IPR001238">
    <property type="entry name" value="DNA-binding_RecF"/>
</dbReference>
<dbReference type="InterPro" id="IPR018078">
    <property type="entry name" value="DNA-binding_RecF_CS"/>
</dbReference>
<dbReference type="InterPro" id="IPR027417">
    <property type="entry name" value="P-loop_NTPase"/>
</dbReference>
<dbReference type="InterPro" id="IPR003395">
    <property type="entry name" value="RecF/RecN/SMC_N"/>
</dbReference>
<dbReference type="InterPro" id="IPR042174">
    <property type="entry name" value="RecF_2"/>
</dbReference>
<dbReference type="NCBIfam" id="TIGR00611">
    <property type="entry name" value="recf"/>
    <property type="match status" value="1"/>
</dbReference>
<dbReference type="PANTHER" id="PTHR32182">
    <property type="entry name" value="DNA REPLICATION AND REPAIR PROTEIN RECF"/>
    <property type="match status" value="1"/>
</dbReference>
<dbReference type="PANTHER" id="PTHR32182:SF0">
    <property type="entry name" value="DNA REPLICATION AND REPAIR PROTEIN RECF"/>
    <property type="match status" value="1"/>
</dbReference>
<dbReference type="Pfam" id="PF02463">
    <property type="entry name" value="SMC_N"/>
    <property type="match status" value="1"/>
</dbReference>
<dbReference type="SUPFAM" id="SSF52540">
    <property type="entry name" value="P-loop containing nucleoside triphosphate hydrolases"/>
    <property type="match status" value="1"/>
</dbReference>
<dbReference type="PROSITE" id="PS00617">
    <property type="entry name" value="RECF_1"/>
    <property type="match status" value="1"/>
</dbReference>
<dbReference type="PROSITE" id="PS00618">
    <property type="entry name" value="RECF_2"/>
    <property type="match status" value="1"/>
</dbReference>
<name>RECF_RICAE</name>
<feature type="chain" id="PRO_1000205503" description="DNA replication and repair protein RecF">
    <location>
        <begin position="1"/>
        <end position="360"/>
    </location>
</feature>
<feature type="binding site" evidence="1">
    <location>
        <begin position="33"/>
        <end position="40"/>
    </location>
    <ligand>
        <name>ATP</name>
        <dbReference type="ChEBI" id="CHEBI:30616"/>
    </ligand>
</feature>